<gene>
    <name type="primary">nbp35</name>
    <name type="ORF">SPAC637.08</name>
</gene>
<evidence type="ECO:0000255" key="1">
    <source>
        <dbReference type="HAMAP-Rule" id="MF_03038"/>
    </source>
</evidence>
<evidence type="ECO:0000256" key="2">
    <source>
        <dbReference type="SAM" id="MobiDB-lite"/>
    </source>
</evidence>
<organism>
    <name type="scientific">Schizosaccharomyces pombe (strain 972 / ATCC 24843)</name>
    <name type="common">Fission yeast</name>
    <dbReference type="NCBI Taxonomy" id="284812"/>
    <lineage>
        <taxon>Eukaryota</taxon>
        <taxon>Fungi</taxon>
        <taxon>Dikarya</taxon>
        <taxon>Ascomycota</taxon>
        <taxon>Taphrinomycotina</taxon>
        <taxon>Schizosaccharomycetes</taxon>
        <taxon>Schizosaccharomycetales</taxon>
        <taxon>Schizosaccharomycetaceae</taxon>
        <taxon>Schizosaccharomyces</taxon>
    </lineage>
</organism>
<accession>O94442</accession>
<sequence length="317" mass="34261">MQIQETVPLDAPEHCPGPSSENAGTASACEGCPNQQICASAPRGEDPDLPLVVERLKEIKHKILVLSGKGGVGKSTFSSQLAWGLSLEEDKQIGLMDVDICGPSIPRIMGVEKEEAHQSSKGWSPIYVCPNLAVMSIGFLLPSEDSSVIWRGPKKNGLIKQFIKDVNWENLDYLIVDTPPGTSDEHLSLVQFFKNSGIDGAVVVTTPQEVALQDVRKEIDFCRKASIPILGLVENMSGFVCPSCKGKSNIFTITTGGGEALAKEMGLPFLGKIPLDPLIARSCDFGKSFIDECPESPASEIIIDIINKIDESLQKRQ</sequence>
<proteinExistence type="inferred from homology"/>
<dbReference type="EMBL" id="CU329670">
    <property type="protein sequence ID" value="CAA22587.1"/>
    <property type="molecule type" value="Genomic_DNA"/>
</dbReference>
<dbReference type="PIR" id="T39000">
    <property type="entry name" value="T39000"/>
</dbReference>
<dbReference type="RefSeq" id="NP_594626.1">
    <property type="nucleotide sequence ID" value="NM_001020054.2"/>
</dbReference>
<dbReference type="SMR" id="O94442"/>
<dbReference type="BioGRID" id="279838">
    <property type="interactions" value="1"/>
</dbReference>
<dbReference type="FunCoup" id="O94442">
    <property type="interactions" value="470"/>
</dbReference>
<dbReference type="STRING" id="284812.O94442"/>
<dbReference type="iPTMnet" id="O94442"/>
<dbReference type="PaxDb" id="4896-SPAC637.08.1"/>
<dbReference type="EnsemblFungi" id="SPAC637.08.1">
    <property type="protein sequence ID" value="SPAC637.08.1:pep"/>
    <property type="gene ID" value="SPAC637.08"/>
</dbReference>
<dbReference type="GeneID" id="2543416"/>
<dbReference type="KEGG" id="spo:2543416"/>
<dbReference type="PomBase" id="SPAC637.08">
    <property type="gene designation" value="nbp35"/>
</dbReference>
<dbReference type="VEuPathDB" id="FungiDB:SPAC637.08"/>
<dbReference type="eggNOG" id="KOG3022">
    <property type="taxonomic scope" value="Eukaryota"/>
</dbReference>
<dbReference type="HOGENOM" id="CLU_024839_0_1_1"/>
<dbReference type="InParanoid" id="O94442"/>
<dbReference type="OMA" id="VSGCPMR"/>
<dbReference type="PhylomeDB" id="O94442"/>
<dbReference type="PRO" id="PR:O94442"/>
<dbReference type="Proteomes" id="UP000002485">
    <property type="component" value="Chromosome I"/>
</dbReference>
<dbReference type="GO" id="GO:0005829">
    <property type="term" value="C:cytosol"/>
    <property type="evidence" value="ECO:0007005"/>
    <property type="project" value="PomBase"/>
</dbReference>
<dbReference type="GO" id="GO:1904564">
    <property type="term" value="C:cytosolic [4Fe-4S] assembly scaffold complex"/>
    <property type="evidence" value="ECO:0000304"/>
    <property type="project" value="PomBase"/>
</dbReference>
<dbReference type="GO" id="GO:0005634">
    <property type="term" value="C:nucleus"/>
    <property type="evidence" value="ECO:0007005"/>
    <property type="project" value="PomBase"/>
</dbReference>
<dbReference type="GO" id="GO:0051539">
    <property type="term" value="F:4 iron, 4 sulfur cluster binding"/>
    <property type="evidence" value="ECO:0000266"/>
    <property type="project" value="PomBase"/>
</dbReference>
<dbReference type="GO" id="GO:0005524">
    <property type="term" value="F:ATP binding"/>
    <property type="evidence" value="ECO:0007669"/>
    <property type="project" value="UniProtKB-KW"/>
</dbReference>
<dbReference type="GO" id="GO:0016887">
    <property type="term" value="F:ATP hydrolysis activity"/>
    <property type="evidence" value="ECO:0000266"/>
    <property type="project" value="PomBase"/>
</dbReference>
<dbReference type="GO" id="GO:0140663">
    <property type="term" value="F:ATP-dependent FeS chaperone activity"/>
    <property type="evidence" value="ECO:0007669"/>
    <property type="project" value="InterPro"/>
</dbReference>
<dbReference type="GO" id="GO:0051536">
    <property type="term" value="F:iron-sulfur cluster binding"/>
    <property type="evidence" value="ECO:0000318"/>
    <property type="project" value="GO_Central"/>
</dbReference>
<dbReference type="GO" id="GO:0046872">
    <property type="term" value="F:metal ion binding"/>
    <property type="evidence" value="ECO:0007669"/>
    <property type="project" value="UniProtKB-KW"/>
</dbReference>
<dbReference type="GO" id="GO:0044572">
    <property type="term" value="P:[4Fe-4S] cluster assembly"/>
    <property type="evidence" value="ECO:0000266"/>
    <property type="project" value="PomBase"/>
</dbReference>
<dbReference type="GO" id="GO:0016226">
    <property type="term" value="P:iron-sulfur cluster assembly"/>
    <property type="evidence" value="ECO:0000318"/>
    <property type="project" value="GO_Central"/>
</dbReference>
<dbReference type="CDD" id="cd02037">
    <property type="entry name" value="Mrp_NBP35"/>
    <property type="match status" value="1"/>
</dbReference>
<dbReference type="FunFam" id="3.40.50.300:FF:000427">
    <property type="entry name" value="Cytosolic Fe-S cluster assembly factor NUBP1"/>
    <property type="match status" value="1"/>
</dbReference>
<dbReference type="Gene3D" id="3.40.50.300">
    <property type="entry name" value="P-loop containing nucleotide triphosphate hydrolases"/>
    <property type="match status" value="1"/>
</dbReference>
<dbReference type="HAMAP" id="MF_02040">
    <property type="entry name" value="Mrp_NBP35"/>
    <property type="match status" value="1"/>
</dbReference>
<dbReference type="HAMAP" id="MF_03038">
    <property type="entry name" value="NUBP1"/>
    <property type="match status" value="1"/>
</dbReference>
<dbReference type="InterPro" id="IPR000808">
    <property type="entry name" value="Mrp-like_CS"/>
</dbReference>
<dbReference type="InterPro" id="IPR019591">
    <property type="entry name" value="Mrp/NBP35_ATP-bd"/>
</dbReference>
<dbReference type="InterPro" id="IPR028601">
    <property type="entry name" value="NUBP1/Nbp35"/>
</dbReference>
<dbReference type="InterPro" id="IPR027417">
    <property type="entry name" value="P-loop_NTPase"/>
</dbReference>
<dbReference type="InterPro" id="IPR033756">
    <property type="entry name" value="YlxH/NBP35"/>
</dbReference>
<dbReference type="PANTHER" id="PTHR23264:SF35">
    <property type="entry name" value="CYTOSOLIC FE-S CLUSTER ASSEMBLY FACTOR NUBP1"/>
    <property type="match status" value="1"/>
</dbReference>
<dbReference type="PANTHER" id="PTHR23264">
    <property type="entry name" value="NUCLEOTIDE-BINDING PROTEIN NBP35 YEAST -RELATED"/>
    <property type="match status" value="1"/>
</dbReference>
<dbReference type="Pfam" id="PF10609">
    <property type="entry name" value="ParA"/>
    <property type="match status" value="1"/>
</dbReference>
<dbReference type="SUPFAM" id="SSF52540">
    <property type="entry name" value="P-loop containing nucleoside triphosphate hydrolases"/>
    <property type="match status" value="1"/>
</dbReference>
<dbReference type="PROSITE" id="PS01215">
    <property type="entry name" value="MRP"/>
    <property type="match status" value="1"/>
</dbReference>
<comment type="function">
    <text evidence="1">Component of the cytosolic iron-sulfur (Fe/S) protein assembly (CIA) machinery. Required for maturation of extramitochondrial Fe-S proteins. The nbp35-cfd1 heterotetramer forms a Fe-S scaffold complex, mediating the de novo assembly of an Fe-S cluster and its transfer to target apoproteins.</text>
</comment>
<comment type="cofactor">
    <cofactor evidence="1">
        <name>[4Fe-4S] cluster</name>
        <dbReference type="ChEBI" id="CHEBI:49883"/>
    </cofactor>
    <text evidence="1">Binds 4 [4Fe-4S] clusters per heterotetramer. Contains two stable clusters in the N-termini of nbp35 and two labile, bridging clusters between subunits of the nbp35-cfd1 heterotetramer.</text>
</comment>
<comment type="subunit">
    <text evidence="1">Heterotetramer of 2 nbp35 and 2 cfd1 chains.</text>
</comment>
<comment type="subcellular location">
    <subcellularLocation>
        <location evidence="1">Cytoplasm</location>
    </subcellularLocation>
</comment>
<comment type="similarity">
    <text evidence="1">Belongs to the Mrp/NBP35 ATP-binding proteins family. NUBP1/NBP35 subfamily.</text>
</comment>
<feature type="chain" id="PRO_0000278902" description="Cytosolic Fe-S cluster assembly factor nbp35">
    <location>
        <begin position="1"/>
        <end position="317"/>
    </location>
</feature>
<feature type="region of interest" description="Disordered" evidence="2">
    <location>
        <begin position="1"/>
        <end position="27"/>
    </location>
</feature>
<feature type="binding site" evidence="1">
    <location>
        <position position="15"/>
    </location>
    <ligand>
        <name>[4Fe-4S] cluster</name>
        <dbReference type="ChEBI" id="CHEBI:49883"/>
        <label>1</label>
    </ligand>
</feature>
<feature type="binding site" evidence="1">
    <location>
        <position position="29"/>
    </location>
    <ligand>
        <name>[4Fe-4S] cluster</name>
        <dbReference type="ChEBI" id="CHEBI:49883"/>
        <label>1</label>
    </ligand>
</feature>
<feature type="binding site" evidence="1">
    <location>
        <position position="32"/>
    </location>
    <ligand>
        <name>[4Fe-4S] cluster</name>
        <dbReference type="ChEBI" id="CHEBI:49883"/>
        <label>1</label>
    </ligand>
</feature>
<feature type="binding site" evidence="1">
    <location>
        <position position="38"/>
    </location>
    <ligand>
        <name>[4Fe-4S] cluster</name>
        <dbReference type="ChEBI" id="CHEBI:49883"/>
        <label>1</label>
    </ligand>
</feature>
<feature type="binding site" evidence="1">
    <location>
        <begin position="68"/>
        <end position="75"/>
    </location>
    <ligand>
        <name>ATP</name>
        <dbReference type="ChEBI" id="CHEBI:30616"/>
    </ligand>
</feature>
<feature type="binding site" evidence="1">
    <location>
        <position position="241"/>
    </location>
    <ligand>
        <name>[4Fe-4S] cluster</name>
        <dbReference type="ChEBI" id="CHEBI:49883"/>
        <label>2</label>
        <note>ligand shared with heterodimeric partner</note>
    </ligand>
</feature>
<feature type="binding site" evidence="1">
    <location>
        <position position="244"/>
    </location>
    <ligand>
        <name>[4Fe-4S] cluster</name>
        <dbReference type="ChEBI" id="CHEBI:49883"/>
        <label>2</label>
        <note>ligand shared with heterodimeric partner</note>
    </ligand>
</feature>
<protein>
    <recommendedName>
        <fullName evidence="1">Cytosolic Fe-S cluster assembly factor nbp35</fullName>
    </recommendedName>
    <alternativeName>
        <fullName evidence="1">Nucleotide-binding protein 35</fullName>
    </alternativeName>
</protein>
<keyword id="KW-0004">4Fe-4S</keyword>
<keyword id="KW-0067">ATP-binding</keyword>
<keyword id="KW-0963">Cytoplasm</keyword>
<keyword id="KW-0408">Iron</keyword>
<keyword id="KW-0411">Iron-sulfur</keyword>
<keyword id="KW-0479">Metal-binding</keyword>
<keyword id="KW-0547">Nucleotide-binding</keyword>
<keyword id="KW-1185">Reference proteome</keyword>
<name>NBP35_SCHPO</name>
<reference key="1">
    <citation type="journal article" date="2002" name="Nature">
        <title>The genome sequence of Schizosaccharomyces pombe.</title>
        <authorList>
            <person name="Wood V."/>
            <person name="Gwilliam R."/>
            <person name="Rajandream M.A."/>
            <person name="Lyne M.H."/>
            <person name="Lyne R."/>
            <person name="Stewart A."/>
            <person name="Sgouros J.G."/>
            <person name="Peat N."/>
            <person name="Hayles J."/>
            <person name="Baker S.G."/>
            <person name="Basham D."/>
            <person name="Bowman S."/>
            <person name="Brooks K."/>
            <person name="Brown D."/>
            <person name="Brown S."/>
            <person name="Chillingworth T."/>
            <person name="Churcher C.M."/>
            <person name="Collins M."/>
            <person name="Connor R."/>
            <person name="Cronin A."/>
            <person name="Davis P."/>
            <person name="Feltwell T."/>
            <person name="Fraser A."/>
            <person name="Gentles S."/>
            <person name="Goble A."/>
            <person name="Hamlin N."/>
            <person name="Harris D.E."/>
            <person name="Hidalgo J."/>
            <person name="Hodgson G."/>
            <person name="Holroyd S."/>
            <person name="Hornsby T."/>
            <person name="Howarth S."/>
            <person name="Huckle E.J."/>
            <person name="Hunt S."/>
            <person name="Jagels K."/>
            <person name="James K.D."/>
            <person name="Jones L."/>
            <person name="Jones M."/>
            <person name="Leather S."/>
            <person name="McDonald S."/>
            <person name="McLean J."/>
            <person name="Mooney P."/>
            <person name="Moule S."/>
            <person name="Mungall K.L."/>
            <person name="Murphy L.D."/>
            <person name="Niblett D."/>
            <person name="Odell C."/>
            <person name="Oliver K."/>
            <person name="O'Neil S."/>
            <person name="Pearson D."/>
            <person name="Quail M.A."/>
            <person name="Rabbinowitsch E."/>
            <person name="Rutherford K.M."/>
            <person name="Rutter S."/>
            <person name="Saunders D."/>
            <person name="Seeger K."/>
            <person name="Sharp S."/>
            <person name="Skelton J."/>
            <person name="Simmonds M.N."/>
            <person name="Squares R."/>
            <person name="Squares S."/>
            <person name="Stevens K."/>
            <person name="Taylor K."/>
            <person name="Taylor R.G."/>
            <person name="Tivey A."/>
            <person name="Walsh S.V."/>
            <person name="Warren T."/>
            <person name="Whitehead S."/>
            <person name="Woodward J.R."/>
            <person name="Volckaert G."/>
            <person name="Aert R."/>
            <person name="Robben J."/>
            <person name="Grymonprez B."/>
            <person name="Weltjens I."/>
            <person name="Vanstreels E."/>
            <person name="Rieger M."/>
            <person name="Schaefer M."/>
            <person name="Mueller-Auer S."/>
            <person name="Gabel C."/>
            <person name="Fuchs M."/>
            <person name="Duesterhoeft A."/>
            <person name="Fritzc C."/>
            <person name="Holzer E."/>
            <person name="Moestl D."/>
            <person name="Hilbert H."/>
            <person name="Borzym K."/>
            <person name="Langer I."/>
            <person name="Beck A."/>
            <person name="Lehrach H."/>
            <person name="Reinhardt R."/>
            <person name="Pohl T.M."/>
            <person name="Eger P."/>
            <person name="Zimmermann W."/>
            <person name="Wedler H."/>
            <person name="Wambutt R."/>
            <person name="Purnelle B."/>
            <person name="Goffeau A."/>
            <person name="Cadieu E."/>
            <person name="Dreano S."/>
            <person name="Gloux S."/>
            <person name="Lelaure V."/>
            <person name="Mottier S."/>
            <person name="Galibert F."/>
            <person name="Aves S.J."/>
            <person name="Xiang Z."/>
            <person name="Hunt C."/>
            <person name="Moore K."/>
            <person name="Hurst S.M."/>
            <person name="Lucas M."/>
            <person name="Rochet M."/>
            <person name="Gaillardin C."/>
            <person name="Tallada V.A."/>
            <person name="Garzon A."/>
            <person name="Thode G."/>
            <person name="Daga R.R."/>
            <person name="Cruzado L."/>
            <person name="Jimenez J."/>
            <person name="Sanchez M."/>
            <person name="del Rey F."/>
            <person name="Benito J."/>
            <person name="Dominguez A."/>
            <person name="Revuelta J.L."/>
            <person name="Moreno S."/>
            <person name="Armstrong J."/>
            <person name="Forsburg S.L."/>
            <person name="Cerutti L."/>
            <person name="Lowe T."/>
            <person name="McCombie W.R."/>
            <person name="Paulsen I."/>
            <person name="Potashkin J."/>
            <person name="Shpakovski G.V."/>
            <person name="Ussery D."/>
            <person name="Barrell B.G."/>
            <person name="Nurse P."/>
        </authorList>
    </citation>
    <scope>NUCLEOTIDE SEQUENCE [LARGE SCALE GENOMIC DNA]</scope>
    <source>
        <strain>972 / ATCC 24843</strain>
    </source>
</reference>